<accession>P94853</accession>
<evidence type="ECO:0000250" key="1"/>
<evidence type="ECO:0000305" key="2"/>
<comment type="function">
    <text>Light-driven chloride pump.</text>
</comment>
<comment type="subcellular location">
    <subcellularLocation>
        <location>Cell membrane</location>
        <topology>Multi-pass membrane protein</topology>
    </subcellularLocation>
</comment>
<comment type="similarity">
    <text evidence="2">Belongs to the archaeal/bacterial/fungal opsin family.</text>
</comment>
<proteinExistence type="inferred from homology"/>
<protein>
    <recommendedName>
        <fullName>Cruxhalorhodopsin-3</fullName>
        <shortName>CHR-3</shortName>
    </recommendedName>
</protein>
<reference key="1">
    <citation type="journal article" date="1996" name="Biochem. Biophys. Res. Commun.">
        <title>Novel bacterial rhodopsins from Haloarcula vallismortis.</title>
        <authorList>
            <person name="Kitajima T."/>
            <person name="Hirayama J."/>
            <person name="Ihara K."/>
            <person name="Sugiyama Y."/>
            <person name="Kamo N."/>
            <person name="Mukohata Y."/>
        </authorList>
    </citation>
    <scope>NUCLEOTIDE SEQUENCE [GENOMIC DNA]</scope>
    <source>
        <strain>ATCC 29715 / DSM 3756 / JCM 8877 / NBRC 14741 / NCIMB 2082</strain>
    </source>
</reference>
<gene>
    <name type="primary">choP3</name>
</gene>
<keyword id="KW-1003">Cell membrane</keyword>
<keyword id="KW-0868">Chloride</keyword>
<keyword id="KW-0157">Chromophore</keyword>
<keyword id="KW-0406">Ion transport</keyword>
<keyword id="KW-0472">Membrane</keyword>
<keyword id="KW-0600">Photoreceptor protein</keyword>
<keyword id="KW-0675">Receptor</keyword>
<keyword id="KW-0681">Retinal protein</keyword>
<keyword id="KW-0716">Sensory transduction</keyword>
<keyword id="KW-0812">Transmembrane</keyword>
<keyword id="KW-1133">Transmembrane helix</keyword>
<keyword id="KW-0813">Transport</keyword>
<dbReference type="EMBL" id="D31881">
    <property type="protein sequence ID" value="BAA06679.1"/>
    <property type="molecule type" value="Genomic_DNA"/>
</dbReference>
<dbReference type="PIR" id="T48842">
    <property type="entry name" value="T48842"/>
</dbReference>
<dbReference type="RefSeq" id="WP_004517017.1">
    <property type="nucleotide sequence ID" value="NZ_FNOF01000005.1"/>
</dbReference>
<dbReference type="SMR" id="P94853"/>
<dbReference type="STRING" id="28442.SAMN05443574_10584"/>
<dbReference type="GO" id="GO:0005886">
    <property type="term" value="C:plasma membrane"/>
    <property type="evidence" value="ECO:0007669"/>
    <property type="project" value="UniProtKB-SubCell"/>
</dbReference>
<dbReference type="GO" id="GO:0005216">
    <property type="term" value="F:monoatomic ion channel activity"/>
    <property type="evidence" value="ECO:0007669"/>
    <property type="project" value="InterPro"/>
</dbReference>
<dbReference type="GO" id="GO:0009881">
    <property type="term" value="F:photoreceptor activity"/>
    <property type="evidence" value="ECO:0007669"/>
    <property type="project" value="UniProtKB-KW"/>
</dbReference>
<dbReference type="GO" id="GO:0007602">
    <property type="term" value="P:phototransduction"/>
    <property type="evidence" value="ECO:0007669"/>
    <property type="project" value="UniProtKB-KW"/>
</dbReference>
<dbReference type="CDD" id="cd15243">
    <property type="entry name" value="7tm_Halorhodopsin"/>
    <property type="match status" value="1"/>
</dbReference>
<dbReference type="Gene3D" id="1.20.1070.10">
    <property type="entry name" value="Rhodopsin 7-helix transmembrane proteins"/>
    <property type="match status" value="1"/>
</dbReference>
<dbReference type="InterPro" id="IPR001425">
    <property type="entry name" value="Arc/bac/fun_rhodopsins"/>
</dbReference>
<dbReference type="InterPro" id="IPR018229">
    <property type="entry name" value="Rhodopsin_retinal_BS"/>
</dbReference>
<dbReference type="PANTHER" id="PTHR28286">
    <property type="match status" value="1"/>
</dbReference>
<dbReference type="PANTHER" id="PTHR28286:SF2">
    <property type="entry name" value="BACTERIORHODOPSIN _OPSIN, NOPA (EUROFUNG)"/>
    <property type="match status" value="1"/>
</dbReference>
<dbReference type="Pfam" id="PF01036">
    <property type="entry name" value="Bac_rhodopsin"/>
    <property type="match status" value="1"/>
</dbReference>
<dbReference type="PRINTS" id="PR00251">
    <property type="entry name" value="BACTRLOPSIN"/>
</dbReference>
<dbReference type="SMART" id="SM01021">
    <property type="entry name" value="Bac_rhodopsin"/>
    <property type="match status" value="1"/>
</dbReference>
<dbReference type="SUPFAM" id="SSF81321">
    <property type="entry name" value="Family A G protein-coupled receptor-like"/>
    <property type="match status" value="1"/>
</dbReference>
<dbReference type="PROSITE" id="PS00950">
    <property type="entry name" value="BACTERIAL_OPSIN_1"/>
    <property type="match status" value="1"/>
</dbReference>
<dbReference type="PROSITE" id="PS00327">
    <property type="entry name" value="BACTERIAL_OPSIN_RET"/>
    <property type="match status" value="1"/>
</dbReference>
<sequence length="276" mass="29116">MPAASTAATTLLQASQSEVLGEIQSNFLLNSSLWVNIALAGVVILLFVAMGRELESSRAKLIWVATMLVPLVSISSYAGLASGLTVGFLQMPPGHALAGQEVLSPWGRYLTWTFSTPMILLALGLLADTDMASLFTAITMDIGMCITGLAAALVTSSHLLRWVFYGISCAFFIAVLYVLLVEWPADAEAAGTSEIFGTLKLLTVVLWLGYPILWALGSEGVALLSVGVTSWGYSGLDILAKYVFAFLLLRWVAANEDTVTQAGMSLGSGGAAPADD</sequence>
<name>BACH_HALVA</name>
<organism>
    <name type="scientific">Haloarcula vallismortis</name>
    <name type="common">Halobacterium vallismortis</name>
    <dbReference type="NCBI Taxonomy" id="28442"/>
    <lineage>
        <taxon>Archaea</taxon>
        <taxon>Methanobacteriati</taxon>
        <taxon>Methanobacteriota</taxon>
        <taxon>Stenosarchaea group</taxon>
        <taxon>Halobacteria</taxon>
        <taxon>Halobacteriales</taxon>
        <taxon>Haloarculaceae</taxon>
        <taxon>Haloarcula</taxon>
    </lineage>
</organism>
<feature type="propeptide" id="PRO_0000020244" evidence="1">
    <location>
        <begin position="1"/>
        <end position="21"/>
    </location>
</feature>
<feature type="chain" id="PRO_0000020245" description="Cruxhalorhodopsin-3">
    <location>
        <begin position="22"/>
        <end position="276"/>
    </location>
</feature>
<feature type="topological domain" description="Extracellular" evidence="1">
    <location>
        <begin position="22"/>
        <end position="25"/>
    </location>
</feature>
<feature type="transmembrane region" description="Helical; Name=Helix A" evidence="1">
    <location>
        <begin position="26"/>
        <end position="51"/>
    </location>
</feature>
<feature type="topological domain" description="Cytoplasmic" evidence="1">
    <location>
        <begin position="52"/>
        <end position="57"/>
    </location>
</feature>
<feature type="transmembrane region" description="Helical; Name=Helix B" evidence="1">
    <location>
        <begin position="58"/>
        <end position="81"/>
    </location>
</feature>
<feature type="topological domain" description="Extracellular" evidence="1">
    <location>
        <begin position="82"/>
        <end position="105"/>
    </location>
</feature>
<feature type="transmembrane region" description="Helical; Name=Helix C" evidence="1">
    <location>
        <begin position="106"/>
        <end position="127"/>
    </location>
</feature>
<feature type="topological domain" description="Cytoplasmic" evidence="1">
    <location>
        <begin position="128"/>
        <end position="130"/>
    </location>
</feature>
<feature type="transmembrane region" description="Helical; Name=Helix D" evidence="1">
    <location>
        <begin position="131"/>
        <end position="154"/>
    </location>
</feature>
<feature type="topological domain" description="Extracellular" evidence="1">
    <location>
        <begin position="155"/>
        <end position="157"/>
    </location>
</feature>
<feature type="transmembrane region" description="Helical; Name=Helix E" evidence="1">
    <location>
        <begin position="158"/>
        <end position="180"/>
    </location>
</feature>
<feature type="topological domain" description="Cytoplasmic" evidence="1">
    <location>
        <begin position="181"/>
        <end position="192"/>
    </location>
</feature>
<feature type="transmembrane region" description="Helical; Name=Helix F" evidence="1">
    <location>
        <begin position="193"/>
        <end position="216"/>
    </location>
</feature>
<feature type="topological domain" description="Extracellular" evidence="1">
    <location>
        <begin position="217"/>
        <end position="225"/>
    </location>
</feature>
<feature type="transmembrane region" description="Helical; Name=Helix G" evidence="1">
    <location>
        <begin position="226"/>
        <end position="254"/>
    </location>
</feature>
<feature type="topological domain" description="Cytoplasmic" evidence="1">
    <location>
        <begin position="255"/>
        <end position="276"/>
    </location>
</feature>
<feature type="modified residue" description="N6-(retinylidene)lysine" evidence="1">
    <location>
        <position position="241"/>
    </location>
</feature>